<gene>
    <name evidence="1" type="primary">kptA</name>
    <name type="ordered locus">ECUMN_4941</name>
</gene>
<proteinExistence type="inferred from homology"/>
<protein>
    <recommendedName>
        <fullName evidence="1">Probable RNA 2'-phosphotransferase</fullName>
        <ecNumber evidence="1">2.7.1.-</ecNumber>
    </recommendedName>
</protein>
<name>KPTA_ECOLU</name>
<evidence type="ECO:0000255" key="1">
    <source>
        <dbReference type="HAMAP-Rule" id="MF_00299"/>
    </source>
</evidence>
<reference key="1">
    <citation type="journal article" date="2009" name="PLoS Genet.">
        <title>Organised genome dynamics in the Escherichia coli species results in highly diverse adaptive paths.</title>
        <authorList>
            <person name="Touchon M."/>
            <person name="Hoede C."/>
            <person name="Tenaillon O."/>
            <person name="Barbe V."/>
            <person name="Baeriswyl S."/>
            <person name="Bidet P."/>
            <person name="Bingen E."/>
            <person name="Bonacorsi S."/>
            <person name="Bouchier C."/>
            <person name="Bouvet O."/>
            <person name="Calteau A."/>
            <person name="Chiapello H."/>
            <person name="Clermont O."/>
            <person name="Cruveiller S."/>
            <person name="Danchin A."/>
            <person name="Diard M."/>
            <person name="Dossat C."/>
            <person name="Karoui M.E."/>
            <person name="Frapy E."/>
            <person name="Garry L."/>
            <person name="Ghigo J.M."/>
            <person name="Gilles A.M."/>
            <person name="Johnson J."/>
            <person name="Le Bouguenec C."/>
            <person name="Lescat M."/>
            <person name="Mangenot S."/>
            <person name="Martinez-Jehanne V."/>
            <person name="Matic I."/>
            <person name="Nassif X."/>
            <person name="Oztas S."/>
            <person name="Petit M.A."/>
            <person name="Pichon C."/>
            <person name="Rouy Z."/>
            <person name="Ruf C.S."/>
            <person name="Schneider D."/>
            <person name="Tourret J."/>
            <person name="Vacherie B."/>
            <person name="Vallenet D."/>
            <person name="Medigue C."/>
            <person name="Rocha E.P.C."/>
            <person name="Denamur E."/>
        </authorList>
    </citation>
    <scope>NUCLEOTIDE SEQUENCE [LARGE SCALE GENOMIC DNA]</scope>
    <source>
        <strain>UMN026 / ExPEC</strain>
    </source>
</reference>
<organism>
    <name type="scientific">Escherichia coli O17:K52:H18 (strain UMN026 / ExPEC)</name>
    <dbReference type="NCBI Taxonomy" id="585056"/>
    <lineage>
        <taxon>Bacteria</taxon>
        <taxon>Pseudomonadati</taxon>
        <taxon>Pseudomonadota</taxon>
        <taxon>Gammaproteobacteria</taxon>
        <taxon>Enterobacterales</taxon>
        <taxon>Enterobacteriaceae</taxon>
        <taxon>Escherichia</taxon>
    </lineage>
</organism>
<feature type="chain" id="PRO_1000119480" description="Probable RNA 2'-phosphotransferase">
    <location>
        <begin position="1"/>
        <end position="184"/>
    </location>
</feature>
<accession>B7NGY8</accession>
<comment type="function">
    <text evidence="1">Removes the 2'-phosphate from RNA via an intermediate in which the phosphate is ADP-ribosylated by NAD followed by a presumed transesterification to release the RNA and generate ADP-ribose 1''-2''-cyclic phosphate (APPR&gt;P). May function as an ADP-ribosylase.</text>
</comment>
<comment type="similarity">
    <text evidence="1">Belongs to the KptA/TPT1 family.</text>
</comment>
<dbReference type="EC" id="2.7.1.-" evidence="1"/>
<dbReference type="EMBL" id="CU928163">
    <property type="protein sequence ID" value="CAR16052.1"/>
    <property type="molecule type" value="Genomic_DNA"/>
</dbReference>
<dbReference type="RefSeq" id="WP_001151855.1">
    <property type="nucleotide sequence ID" value="NC_011751.1"/>
</dbReference>
<dbReference type="RefSeq" id="YP_002415519.1">
    <property type="nucleotide sequence ID" value="NC_011751.1"/>
</dbReference>
<dbReference type="SMR" id="B7NGY8"/>
<dbReference type="STRING" id="585056.ECUMN_4941"/>
<dbReference type="KEGG" id="eum:ECUMN_4941"/>
<dbReference type="PATRIC" id="fig|585056.7.peg.5104"/>
<dbReference type="HOGENOM" id="CLU_052998_4_0_6"/>
<dbReference type="Proteomes" id="UP000007097">
    <property type="component" value="Chromosome"/>
</dbReference>
<dbReference type="GO" id="GO:0003950">
    <property type="term" value="F:NAD+ poly-ADP-ribosyltransferase activity"/>
    <property type="evidence" value="ECO:0007669"/>
    <property type="project" value="InterPro"/>
</dbReference>
<dbReference type="GO" id="GO:0000215">
    <property type="term" value="F:tRNA 2'-phosphotransferase activity"/>
    <property type="evidence" value="ECO:0007669"/>
    <property type="project" value="TreeGrafter"/>
</dbReference>
<dbReference type="GO" id="GO:0006388">
    <property type="term" value="P:tRNA splicing, via endonucleolytic cleavage and ligation"/>
    <property type="evidence" value="ECO:0007669"/>
    <property type="project" value="UniProtKB-UniRule"/>
</dbReference>
<dbReference type="FunFam" id="1.10.10.970:FF:000001">
    <property type="entry name" value="RNA 2'-phosphotransferase"/>
    <property type="match status" value="1"/>
</dbReference>
<dbReference type="FunFam" id="3.20.170.30:FF:000001">
    <property type="entry name" value="RNA 2'-phosphotransferase"/>
    <property type="match status" value="1"/>
</dbReference>
<dbReference type="Gene3D" id="3.20.170.30">
    <property type="match status" value="1"/>
</dbReference>
<dbReference type="Gene3D" id="1.10.10.970">
    <property type="entry name" value="RNA 2'-phosphotransferase, Tpt1/KptA family, N-terminal domain"/>
    <property type="match status" value="1"/>
</dbReference>
<dbReference type="HAMAP" id="MF_00299">
    <property type="entry name" value="KptA"/>
    <property type="match status" value="1"/>
</dbReference>
<dbReference type="InterPro" id="IPR002745">
    <property type="entry name" value="Ptrans_KptA/Tpt1"/>
</dbReference>
<dbReference type="InterPro" id="IPR042081">
    <property type="entry name" value="RNA_2'-PTrans_C"/>
</dbReference>
<dbReference type="InterPro" id="IPR022928">
    <property type="entry name" value="RNA_2'-PTrans_KptA"/>
</dbReference>
<dbReference type="InterPro" id="IPR042080">
    <property type="entry name" value="RNA_2'-PTrans_N"/>
</dbReference>
<dbReference type="NCBIfam" id="NF002012">
    <property type="entry name" value="PRK00819.1-1"/>
    <property type="match status" value="1"/>
</dbReference>
<dbReference type="NCBIfam" id="NF002014">
    <property type="entry name" value="PRK00819.1-4"/>
    <property type="match status" value="1"/>
</dbReference>
<dbReference type="PANTHER" id="PTHR12684">
    <property type="entry name" value="PUTATIVE PHOSPHOTRANSFERASE"/>
    <property type="match status" value="1"/>
</dbReference>
<dbReference type="PANTHER" id="PTHR12684:SF2">
    <property type="entry name" value="TRNA 2'-PHOSPHOTRANSFERASE 1"/>
    <property type="match status" value="1"/>
</dbReference>
<dbReference type="Pfam" id="PF01885">
    <property type="entry name" value="PTS_2-RNA"/>
    <property type="match status" value="1"/>
</dbReference>
<dbReference type="SUPFAM" id="SSF56399">
    <property type="entry name" value="ADP-ribosylation"/>
    <property type="match status" value="1"/>
</dbReference>
<keyword id="KW-0520">NAD</keyword>
<keyword id="KW-0808">Transferase</keyword>
<sequence length="184" mass="20530">MAKYNEKELADTSKFLSFVLRHKPEAIGIVLDREGWADIDKLILCAQKAGKRLTRALLDTVVATSDKKRFSYSSDGRCIRAVQGHSTSQVAISFAEKTPPQFLYHGTASRFLDEIKKQGLIAGERHYVHLSADEATARKVGARHGSPVILTVKAQEMAKRGLPFWQAENGVWLTSTVAVEFLEW</sequence>